<keyword id="KW-0687">Ribonucleoprotein</keyword>
<keyword id="KW-0689">Ribosomal protein</keyword>
<comment type="similarity">
    <text evidence="1">Belongs to the bacterial ribosomal protein bL34 family.</text>
</comment>
<organism>
    <name type="scientific">Prochlorococcus marinus (strain MIT 9303)</name>
    <dbReference type="NCBI Taxonomy" id="59922"/>
    <lineage>
        <taxon>Bacteria</taxon>
        <taxon>Bacillati</taxon>
        <taxon>Cyanobacteriota</taxon>
        <taxon>Cyanophyceae</taxon>
        <taxon>Synechococcales</taxon>
        <taxon>Prochlorococcaceae</taxon>
        <taxon>Prochlorococcus</taxon>
    </lineage>
</organism>
<proteinExistence type="inferred from homology"/>
<dbReference type="EMBL" id="CP000554">
    <property type="protein sequence ID" value="ABM77364.1"/>
    <property type="molecule type" value="Genomic_DNA"/>
</dbReference>
<dbReference type="RefSeq" id="WP_011825283.1">
    <property type="nucleotide sequence ID" value="NC_008820.1"/>
</dbReference>
<dbReference type="SMR" id="A2C7A4"/>
<dbReference type="STRING" id="59922.P9303_06121"/>
<dbReference type="KEGG" id="pmf:P9303_06121"/>
<dbReference type="HOGENOM" id="CLU_129938_2_1_3"/>
<dbReference type="BioCyc" id="PMAR59922:G1G80-562-MONOMER"/>
<dbReference type="Proteomes" id="UP000002274">
    <property type="component" value="Chromosome"/>
</dbReference>
<dbReference type="GO" id="GO:1990904">
    <property type="term" value="C:ribonucleoprotein complex"/>
    <property type="evidence" value="ECO:0007669"/>
    <property type="project" value="UniProtKB-KW"/>
</dbReference>
<dbReference type="GO" id="GO:0005840">
    <property type="term" value="C:ribosome"/>
    <property type="evidence" value="ECO:0007669"/>
    <property type="project" value="UniProtKB-KW"/>
</dbReference>
<dbReference type="GO" id="GO:0003735">
    <property type="term" value="F:structural constituent of ribosome"/>
    <property type="evidence" value="ECO:0007669"/>
    <property type="project" value="InterPro"/>
</dbReference>
<dbReference type="GO" id="GO:0006412">
    <property type="term" value="P:translation"/>
    <property type="evidence" value="ECO:0007669"/>
    <property type="project" value="UniProtKB-UniRule"/>
</dbReference>
<dbReference type="Gene3D" id="1.10.287.3980">
    <property type="match status" value="1"/>
</dbReference>
<dbReference type="HAMAP" id="MF_00391">
    <property type="entry name" value="Ribosomal_bL34"/>
    <property type="match status" value="1"/>
</dbReference>
<dbReference type="InterPro" id="IPR000271">
    <property type="entry name" value="Ribosomal_bL34"/>
</dbReference>
<dbReference type="InterPro" id="IPR020939">
    <property type="entry name" value="Ribosomal_bL34_CS"/>
</dbReference>
<dbReference type="NCBIfam" id="TIGR01030">
    <property type="entry name" value="rpmH_bact"/>
    <property type="match status" value="1"/>
</dbReference>
<dbReference type="Pfam" id="PF00468">
    <property type="entry name" value="Ribosomal_L34"/>
    <property type="match status" value="1"/>
</dbReference>
<dbReference type="PROSITE" id="PS00784">
    <property type="entry name" value="RIBOSOMAL_L34"/>
    <property type="match status" value="1"/>
</dbReference>
<evidence type="ECO:0000255" key="1">
    <source>
        <dbReference type="HAMAP-Rule" id="MF_00391"/>
    </source>
</evidence>
<evidence type="ECO:0000256" key="2">
    <source>
        <dbReference type="SAM" id="MobiDB-lite"/>
    </source>
</evidence>
<evidence type="ECO:0000305" key="3"/>
<gene>
    <name evidence="1" type="primary">rpmH</name>
    <name evidence="1" type="synonym">rpl34</name>
    <name type="ordered locus">P9303_06121</name>
</gene>
<sequence length="45" mass="5414">MTKRTFGGTSRKRKRVSGFRVRMRTHTGRRVIRSRRKRGRTRLAV</sequence>
<reference key="1">
    <citation type="journal article" date="2007" name="PLoS Genet.">
        <title>Patterns and implications of gene gain and loss in the evolution of Prochlorococcus.</title>
        <authorList>
            <person name="Kettler G.C."/>
            <person name="Martiny A.C."/>
            <person name="Huang K."/>
            <person name="Zucker J."/>
            <person name="Coleman M.L."/>
            <person name="Rodrigue S."/>
            <person name="Chen F."/>
            <person name="Lapidus A."/>
            <person name="Ferriera S."/>
            <person name="Johnson J."/>
            <person name="Steglich C."/>
            <person name="Church G.M."/>
            <person name="Richardson P."/>
            <person name="Chisholm S.W."/>
        </authorList>
    </citation>
    <scope>NUCLEOTIDE SEQUENCE [LARGE SCALE GENOMIC DNA]</scope>
    <source>
        <strain>MIT 9303</strain>
    </source>
</reference>
<accession>A2C7A4</accession>
<feature type="chain" id="PRO_1000013400" description="Large ribosomal subunit protein bL34">
    <location>
        <begin position="1"/>
        <end position="45"/>
    </location>
</feature>
<feature type="region of interest" description="Disordered" evidence="2">
    <location>
        <begin position="1"/>
        <end position="24"/>
    </location>
</feature>
<feature type="compositionally biased region" description="Basic residues" evidence="2">
    <location>
        <begin position="10"/>
        <end position="24"/>
    </location>
</feature>
<name>RL34_PROM3</name>
<protein>
    <recommendedName>
        <fullName evidence="1">Large ribosomal subunit protein bL34</fullName>
    </recommendedName>
    <alternativeName>
        <fullName evidence="3">50S ribosomal protein L34</fullName>
    </alternativeName>
</protein>